<sequence>MSRLSIHPEGSTNATSPAEPLLESDDPAVIKVELAKRGIAFQRWPAKVKLDQNSSESDILAAYAVEIARVQADGRYPTVDAIRITPDHPDREALRQKFLDEHTHAEDEVRFFVEGCGLFCLHIGAEVLQVLCEQNDCINVPAGTRHWFDMGSKPQFCAVRFFDNPEGWIANFTGDAIAERFAKLP</sequence>
<organism>
    <name type="scientific">Prochlorococcus marinus (strain MIT 9313)</name>
    <dbReference type="NCBI Taxonomy" id="74547"/>
    <lineage>
        <taxon>Bacteria</taxon>
        <taxon>Bacillati</taxon>
        <taxon>Cyanobacteriota</taxon>
        <taxon>Cyanophyceae</taxon>
        <taxon>Synechococcales</taxon>
        <taxon>Prochlorococcaceae</taxon>
        <taxon>Prochlorococcus</taxon>
    </lineage>
</organism>
<reference key="1">
    <citation type="journal article" date="2003" name="Nature">
        <title>Genome divergence in two Prochlorococcus ecotypes reflects oceanic niche differentiation.</title>
        <authorList>
            <person name="Rocap G."/>
            <person name="Larimer F.W."/>
            <person name="Lamerdin J.E."/>
            <person name="Malfatti S."/>
            <person name="Chain P."/>
            <person name="Ahlgren N.A."/>
            <person name="Arellano A."/>
            <person name="Coleman M."/>
            <person name="Hauser L."/>
            <person name="Hess W.R."/>
            <person name="Johnson Z.I."/>
            <person name="Land M.L."/>
            <person name="Lindell D."/>
            <person name="Post A.F."/>
            <person name="Regala W."/>
            <person name="Shah M."/>
            <person name="Shaw S.L."/>
            <person name="Steglich C."/>
            <person name="Sullivan M.B."/>
            <person name="Ting C.S."/>
            <person name="Tolonen A."/>
            <person name="Webb E.A."/>
            <person name="Zinser E.R."/>
            <person name="Chisholm S.W."/>
        </authorList>
    </citation>
    <scope>NUCLEOTIDE SEQUENCE [LARGE SCALE GENOMIC DNA]</scope>
    <source>
        <strain>MIT 9313</strain>
    </source>
</reference>
<keyword id="KW-0028">Amino-acid biosynthesis</keyword>
<keyword id="KW-0223">Dioxygenase</keyword>
<keyword id="KW-0408">Iron</keyword>
<keyword id="KW-0479">Metal-binding</keyword>
<keyword id="KW-0486">Methionine biosynthesis</keyword>
<keyword id="KW-0533">Nickel</keyword>
<keyword id="KW-0560">Oxidoreductase</keyword>
<keyword id="KW-1185">Reference proteome</keyword>
<evidence type="ECO:0000255" key="1">
    <source>
        <dbReference type="HAMAP-Rule" id="MF_01682"/>
    </source>
</evidence>
<evidence type="ECO:0000256" key="2">
    <source>
        <dbReference type="SAM" id="MobiDB-lite"/>
    </source>
</evidence>
<protein>
    <recommendedName>
        <fullName evidence="1">Acireductone dioxygenase</fullName>
    </recommendedName>
    <alternativeName>
        <fullName evidence="1">1,2-dihydroxy-3-keto-5-methylthiopentene dioxygenase</fullName>
        <shortName evidence="1">DHK-MTPene dioxygenase</shortName>
    </alternativeName>
    <alternativeName>
        <fullName evidence="1">Acireductone dioxygenase (Fe(2+)-requiring)</fullName>
        <shortName evidence="1">ARD'</shortName>
        <shortName evidence="1">Fe-ARD</shortName>
        <ecNumber evidence="1">1.13.11.54</ecNumber>
    </alternativeName>
    <alternativeName>
        <fullName evidence="1">Acireductone dioxygenase (Ni(2+)-requiring)</fullName>
        <shortName evidence="1">ARD</shortName>
        <shortName evidence="1">Ni-ARD</shortName>
        <ecNumber evidence="1">1.13.11.53</ecNumber>
    </alternativeName>
</protein>
<name>MTND_PROMM</name>
<accession>Q7V8X5</accession>
<comment type="function">
    <text evidence="1">Catalyzes 2 different reactions between oxygen and the acireductone 1,2-dihydroxy-3-keto-5-methylthiopentene (DHK-MTPene) depending upon the metal bound in the active site. Fe-containing acireductone dioxygenase (Fe-ARD) produces formate and 2-keto-4-methylthiobutyrate (KMTB), the alpha-ketoacid precursor of methionine in the methionine recycle pathway. Ni-containing acireductone dioxygenase (Ni-ARD) produces methylthiopropionate, carbon monoxide and formate, and does not lie on the methionine recycle pathway.</text>
</comment>
<comment type="catalytic activity">
    <reaction evidence="1">
        <text>1,2-dihydroxy-5-(methylsulfanyl)pent-1-en-3-one + O2 = 3-(methylsulfanyl)propanoate + CO + formate + 2 H(+)</text>
        <dbReference type="Rhea" id="RHEA:14161"/>
        <dbReference type="ChEBI" id="CHEBI:15378"/>
        <dbReference type="ChEBI" id="CHEBI:15379"/>
        <dbReference type="ChEBI" id="CHEBI:15740"/>
        <dbReference type="ChEBI" id="CHEBI:17245"/>
        <dbReference type="ChEBI" id="CHEBI:49016"/>
        <dbReference type="ChEBI" id="CHEBI:49252"/>
        <dbReference type="EC" id="1.13.11.53"/>
    </reaction>
</comment>
<comment type="catalytic activity">
    <reaction evidence="1">
        <text>1,2-dihydroxy-5-(methylsulfanyl)pent-1-en-3-one + O2 = 4-methylsulfanyl-2-oxobutanoate + formate + 2 H(+)</text>
        <dbReference type="Rhea" id="RHEA:24504"/>
        <dbReference type="ChEBI" id="CHEBI:15378"/>
        <dbReference type="ChEBI" id="CHEBI:15379"/>
        <dbReference type="ChEBI" id="CHEBI:15740"/>
        <dbReference type="ChEBI" id="CHEBI:16723"/>
        <dbReference type="ChEBI" id="CHEBI:49252"/>
        <dbReference type="EC" id="1.13.11.54"/>
    </reaction>
</comment>
<comment type="cofactor">
    <cofactor evidence="1">
        <name>Fe(2+)</name>
        <dbReference type="ChEBI" id="CHEBI:29033"/>
    </cofactor>
    <text evidence="1">Binds 1 Fe(2+) cation per monomer.</text>
</comment>
<comment type="cofactor">
    <cofactor evidence="1">
        <name>Ni(2+)</name>
        <dbReference type="ChEBI" id="CHEBI:49786"/>
    </cofactor>
    <text evidence="1">Binds 1 nickel ion per monomer.</text>
</comment>
<comment type="pathway">
    <text evidence="1">Amino-acid biosynthesis; L-methionine biosynthesis via salvage pathway; L-methionine from S-methyl-5-thio-alpha-D-ribose 1-phosphate: step 5/6.</text>
</comment>
<comment type="subunit">
    <text evidence="1">Monomer.</text>
</comment>
<comment type="similarity">
    <text evidence="1">Belongs to the acireductone dioxygenase (ARD) family.</text>
</comment>
<gene>
    <name evidence="1" type="primary">mtnD</name>
    <name type="ordered locus">PMT_0197</name>
</gene>
<dbReference type="EC" id="1.13.11.54" evidence="1"/>
<dbReference type="EC" id="1.13.11.53" evidence="1"/>
<dbReference type="EMBL" id="BX548175">
    <property type="protein sequence ID" value="CAE20372.1"/>
    <property type="molecule type" value="Genomic_DNA"/>
</dbReference>
<dbReference type="RefSeq" id="WP_011129576.1">
    <property type="nucleotide sequence ID" value="NC_005071.1"/>
</dbReference>
<dbReference type="SMR" id="Q7V8X5"/>
<dbReference type="KEGG" id="pmt:PMT_0197"/>
<dbReference type="eggNOG" id="COG1791">
    <property type="taxonomic scope" value="Bacteria"/>
</dbReference>
<dbReference type="HOGENOM" id="CLU_125400_0_0_3"/>
<dbReference type="OrthoDB" id="9795636at2"/>
<dbReference type="UniPathway" id="UPA00904">
    <property type="reaction ID" value="UER00878"/>
</dbReference>
<dbReference type="Proteomes" id="UP000001423">
    <property type="component" value="Chromosome"/>
</dbReference>
<dbReference type="GO" id="GO:0010308">
    <property type="term" value="F:acireductone dioxygenase (Ni2+-requiring) activity"/>
    <property type="evidence" value="ECO:0007669"/>
    <property type="project" value="UniProtKB-UniRule"/>
</dbReference>
<dbReference type="GO" id="GO:0010309">
    <property type="term" value="F:acireductone dioxygenase [iron(II)-requiring] activity"/>
    <property type="evidence" value="ECO:0007669"/>
    <property type="project" value="UniProtKB-UniRule"/>
</dbReference>
<dbReference type="GO" id="GO:0005506">
    <property type="term" value="F:iron ion binding"/>
    <property type="evidence" value="ECO:0007669"/>
    <property type="project" value="UniProtKB-UniRule"/>
</dbReference>
<dbReference type="GO" id="GO:0016151">
    <property type="term" value="F:nickel cation binding"/>
    <property type="evidence" value="ECO:0007669"/>
    <property type="project" value="UniProtKB-UniRule"/>
</dbReference>
<dbReference type="GO" id="GO:0019509">
    <property type="term" value="P:L-methionine salvage from methylthioadenosine"/>
    <property type="evidence" value="ECO:0007669"/>
    <property type="project" value="UniProtKB-UniRule"/>
</dbReference>
<dbReference type="GO" id="GO:0019284">
    <property type="term" value="P:L-methionine salvage from S-adenosylmethionine"/>
    <property type="evidence" value="ECO:0007669"/>
    <property type="project" value="InterPro"/>
</dbReference>
<dbReference type="CDD" id="cd02232">
    <property type="entry name" value="cupin_ARD"/>
    <property type="match status" value="1"/>
</dbReference>
<dbReference type="Gene3D" id="2.60.120.10">
    <property type="entry name" value="Jelly Rolls"/>
    <property type="match status" value="1"/>
</dbReference>
<dbReference type="HAMAP" id="MF_01682">
    <property type="entry name" value="Salvage_MtnD"/>
    <property type="match status" value="1"/>
</dbReference>
<dbReference type="InterPro" id="IPR004313">
    <property type="entry name" value="ARD"/>
</dbReference>
<dbReference type="InterPro" id="IPR023956">
    <property type="entry name" value="ARD_bac"/>
</dbReference>
<dbReference type="InterPro" id="IPR014710">
    <property type="entry name" value="RmlC-like_jellyroll"/>
</dbReference>
<dbReference type="InterPro" id="IPR011051">
    <property type="entry name" value="RmlC_Cupin_sf"/>
</dbReference>
<dbReference type="PANTHER" id="PTHR23418">
    <property type="entry name" value="ACIREDUCTONE DIOXYGENASE"/>
    <property type="match status" value="1"/>
</dbReference>
<dbReference type="PANTHER" id="PTHR23418:SF0">
    <property type="entry name" value="ACIREDUCTONE DIOXYGENASE"/>
    <property type="match status" value="1"/>
</dbReference>
<dbReference type="Pfam" id="PF03079">
    <property type="entry name" value="ARD"/>
    <property type="match status" value="1"/>
</dbReference>
<dbReference type="SUPFAM" id="SSF51182">
    <property type="entry name" value="RmlC-like cupins"/>
    <property type="match status" value="1"/>
</dbReference>
<proteinExistence type="inferred from homology"/>
<feature type="chain" id="PRO_0000359216" description="Acireductone dioxygenase">
    <location>
        <begin position="1"/>
        <end position="185"/>
    </location>
</feature>
<feature type="region of interest" description="Disordered" evidence="2">
    <location>
        <begin position="1"/>
        <end position="22"/>
    </location>
</feature>
<feature type="binding site" evidence="1">
    <location>
        <position position="102"/>
    </location>
    <ligand>
        <name>Fe(2+)</name>
        <dbReference type="ChEBI" id="CHEBI:29033"/>
    </ligand>
</feature>
<feature type="binding site" evidence="1">
    <location>
        <position position="102"/>
    </location>
    <ligand>
        <name>Ni(2+)</name>
        <dbReference type="ChEBI" id="CHEBI:49786"/>
    </ligand>
</feature>
<feature type="binding site" evidence="1">
    <location>
        <position position="104"/>
    </location>
    <ligand>
        <name>Fe(2+)</name>
        <dbReference type="ChEBI" id="CHEBI:29033"/>
    </ligand>
</feature>
<feature type="binding site" evidence="1">
    <location>
        <position position="104"/>
    </location>
    <ligand>
        <name>Ni(2+)</name>
        <dbReference type="ChEBI" id="CHEBI:49786"/>
    </ligand>
</feature>
<feature type="binding site" evidence="1">
    <location>
        <position position="108"/>
    </location>
    <ligand>
        <name>Fe(2+)</name>
        <dbReference type="ChEBI" id="CHEBI:29033"/>
    </ligand>
</feature>
<feature type="binding site" evidence="1">
    <location>
        <position position="108"/>
    </location>
    <ligand>
        <name>Ni(2+)</name>
        <dbReference type="ChEBI" id="CHEBI:49786"/>
    </ligand>
</feature>
<feature type="binding site" evidence="1">
    <location>
        <position position="146"/>
    </location>
    <ligand>
        <name>Fe(2+)</name>
        <dbReference type="ChEBI" id="CHEBI:29033"/>
    </ligand>
</feature>
<feature type="binding site" evidence="1">
    <location>
        <position position="146"/>
    </location>
    <ligand>
        <name>Ni(2+)</name>
        <dbReference type="ChEBI" id="CHEBI:49786"/>
    </ligand>
</feature>
<feature type="site" description="May play a role in metal incorporation in vivo" evidence="1">
    <location>
        <position position="101"/>
    </location>
</feature>
<feature type="site" description="May play a role in transmitting local conformational changes" evidence="1">
    <location>
        <position position="107"/>
    </location>
</feature>
<feature type="site" description="Important to generate the dianion" evidence="1">
    <location>
        <position position="110"/>
    </location>
</feature>